<protein>
    <recommendedName>
        <fullName evidence="1">Acetyl-coenzyme A carboxylase carboxyl transferase subunit alpha</fullName>
        <shortName evidence="1">ACCase subunit alpha</shortName>
        <shortName evidence="1">Acetyl-CoA carboxylase carboxyltransferase subunit alpha</shortName>
        <ecNumber evidence="1">2.1.3.15</ecNumber>
    </recommendedName>
</protein>
<evidence type="ECO:0000255" key="1">
    <source>
        <dbReference type="HAMAP-Rule" id="MF_00823"/>
    </source>
</evidence>
<evidence type="ECO:0000255" key="2">
    <source>
        <dbReference type="PROSITE-ProRule" id="PRU01137"/>
    </source>
</evidence>
<dbReference type="EC" id="2.1.3.15" evidence="1"/>
<dbReference type="EMBL" id="CP000946">
    <property type="protein sequence ID" value="ACA79089.1"/>
    <property type="molecule type" value="Genomic_DNA"/>
</dbReference>
<dbReference type="RefSeq" id="WP_000055746.1">
    <property type="nucleotide sequence ID" value="NZ_MTFT01000035.1"/>
</dbReference>
<dbReference type="SMR" id="B1IQF6"/>
<dbReference type="GeneID" id="86862695"/>
<dbReference type="KEGG" id="ecl:EcolC_3475"/>
<dbReference type="HOGENOM" id="CLU_015486_0_2_6"/>
<dbReference type="UniPathway" id="UPA00655">
    <property type="reaction ID" value="UER00711"/>
</dbReference>
<dbReference type="GO" id="GO:0009317">
    <property type="term" value="C:acetyl-CoA carboxylase complex"/>
    <property type="evidence" value="ECO:0007669"/>
    <property type="project" value="InterPro"/>
</dbReference>
<dbReference type="GO" id="GO:0003989">
    <property type="term" value="F:acetyl-CoA carboxylase activity"/>
    <property type="evidence" value="ECO:0007669"/>
    <property type="project" value="InterPro"/>
</dbReference>
<dbReference type="GO" id="GO:0005524">
    <property type="term" value="F:ATP binding"/>
    <property type="evidence" value="ECO:0007669"/>
    <property type="project" value="UniProtKB-KW"/>
</dbReference>
<dbReference type="GO" id="GO:0016743">
    <property type="term" value="F:carboxyl- or carbamoyltransferase activity"/>
    <property type="evidence" value="ECO:0007669"/>
    <property type="project" value="UniProtKB-UniRule"/>
</dbReference>
<dbReference type="GO" id="GO:0006633">
    <property type="term" value="P:fatty acid biosynthetic process"/>
    <property type="evidence" value="ECO:0007669"/>
    <property type="project" value="UniProtKB-KW"/>
</dbReference>
<dbReference type="GO" id="GO:2001295">
    <property type="term" value="P:malonyl-CoA biosynthetic process"/>
    <property type="evidence" value="ECO:0007669"/>
    <property type="project" value="UniProtKB-UniRule"/>
</dbReference>
<dbReference type="FunFam" id="3.90.226.10:FF:000008">
    <property type="entry name" value="Acetyl-coenzyme A carboxylase carboxyl transferase subunit alpha"/>
    <property type="match status" value="1"/>
</dbReference>
<dbReference type="Gene3D" id="3.90.226.10">
    <property type="entry name" value="2-enoyl-CoA Hydratase, Chain A, domain 1"/>
    <property type="match status" value="1"/>
</dbReference>
<dbReference type="HAMAP" id="MF_00823">
    <property type="entry name" value="AcetylCoA_CT_alpha"/>
    <property type="match status" value="1"/>
</dbReference>
<dbReference type="InterPro" id="IPR001095">
    <property type="entry name" value="Acetyl_CoA_COase_a_su"/>
</dbReference>
<dbReference type="InterPro" id="IPR029045">
    <property type="entry name" value="ClpP/crotonase-like_dom_sf"/>
</dbReference>
<dbReference type="InterPro" id="IPR011763">
    <property type="entry name" value="COA_CT_C"/>
</dbReference>
<dbReference type="NCBIfam" id="TIGR00513">
    <property type="entry name" value="accA"/>
    <property type="match status" value="1"/>
</dbReference>
<dbReference type="NCBIfam" id="NF041504">
    <property type="entry name" value="AccA_sub"/>
    <property type="match status" value="1"/>
</dbReference>
<dbReference type="NCBIfam" id="NF004344">
    <property type="entry name" value="PRK05724.1"/>
    <property type="match status" value="1"/>
</dbReference>
<dbReference type="PANTHER" id="PTHR42853">
    <property type="entry name" value="ACETYL-COENZYME A CARBOXYLASE CARBOXYL TRANSFERASE SUBUNIT ALPHA"/>
    <property type="match status" value="1"/>
</dbReference>
<dbReference type="PANTHER" id="PTHR42853:SF3">
    <property type="entry name" value="ACETYL-COENZYME A CARBOXYLASE CARBOXYL TRANSFERASE SUBUNIT ALPHA, CHLOROPLASTIC"/>
    <property type="match status" value="1"/>
</dbReference>
<dbReference type="Pfam" id="PF03255">
    <property type="entry name" value="ACCA"/>
    <property type="match status" value="1"/>
</dbReference>
<dbReference type="PRINTS" id="PR01069">
    <property type="entry name" value="ACCCTRFRASEA"/>
</dbReference>
<dbReference type="SUPFAM" id="SSF52096">
    <property type="entry name" value="ClpP/crotonase"/>
    <property type="match status" value="1"/>
</dbReference>
<dbReference type="PROSITE" id="PS50989">
    <property type="entry name" value="COA_CT_CTER"/>
    <property type="match status" value="1"/>
</dbReference>
<reference key="1">
    <citation type="submission" date="2008-02" db="EMBL/GenBank/DDBJ databases">
        <title>Complete sequence of Escherichia coli C str. ATCC 8739.</title>
        <authorList>
            <person name="Copeland A."/>
            <person name="Lucas S."/>
            <person name="Lapidus A."/>
            <person name="Glavina del Rio T."/>
            <person name="Dalin E."/>
            <person name="Tice H."/>
            <person name="Bruce D."/>
            <person name="Goodwin L."/>
            <person name="Pitluck S."/>
            <person name="Kiss H."/>
            <person name="Brettin T."/>
            <person name="Detter J.C."/>
            <person name="Han C."/>
            <person name="Kuske C.R."/>
            <person name="Schmutz J."/>
            <person name="Larimer F."/>
            <person name="Land M."/>
            <person name="Hauser L."/>
            <person name="Kyrpides N."/>
            <person name="Mikhailova N."/>
            <person name="Ingram L."/>
            <person name="Richardson P."/>
        </authorList>
    </citation>
    <scope>NUCLEOTIDE SEQUENCE [LARGE SCALE GENOMIC DNA]</scope>
    <source>
        <strain>ATCC 8739 / DSM 1576 / NBRC 3972 / NCIMB 8545 / WDCM 00012 / Crooks</strain>
    </source>
</reference>
<comment type="function">
    <text evidence="1">Component of the acetyl coenzyme A carboxylase (ACC) complex. First, biotin carboxylase catalyzes the carboxylation of biotin on its carrier protein (BCCP) and then the CO(2) group is transferred by the carboxyltransferase to acetyl-CoA to form malonyl-CoA.</text>
</comment>
<comment type="catalytic activity">
    <reaction evidence="1">
        <text>N(6)-carboxybiotinyl-L-lysyl-[protein] + acetyl-CoA = N(6)-biotinyl-L-lysyl-[protein] + malonyl-CoA</text>
        <dbReference type="Rhea" id="RHEA:54728"/>
        <dbReference type="Rhea" id="RHEA-COMP:10505"/>
        <dbReference type="Rhea" id="RHEA-COMP:10506"/>
        <dbReference type="ChEBI" id="CHEBI:57288"/>
        <dbReference type="ChEBI" id="CHEBI:57384"/>
        <dbReference type="ChEBI" id="CHEBI:83144"/>
        <dbReference type="ChEBI" id="CHEBI:83145"/>
        <dbReference type="EC" id="2.1.3.15"/>
    </reaction>
</comment>
<comment type="pathway">
    <text evidence="1">Lipid metabolism; malonyl-CoA biosynthesis; malonyl-CoA from acetyl-CoA: step 1/1.</text>
</comment>
<comment type="subunit">
    <text evidence="1">Acetyl-CoA carboxylase is a heterohexamer composed of biotin carboxyl carrier protein (AccB), biotin carboxylase (AccC) and two subunits each of ACCase subunit alpha (AccA) and ACCase subunit beta (AccD).</text>
</comment>
<comment type="subcellular location">
    <subcellularLocation>
        <location evidence="1">Cytoplasm</location>
    </subcellularLocation>
</comment>
<comment type="similarity">
    <text evidence="1">Belongs to the AccA family.</text>
</comment>
<keyword id="KW-0067">ATP-binding</keyword>
<keyword id="KW-0963">Cytoplasm</keyword>
<keyword id="KW-0275">Fatty acid biosynthesis</keyword>
<keyword id="KW-0276">Fatty acid metabolism</keyword>
<keyword id="KW-0444">Lipid biosynthesis</keyword>
<keyword id="KW-0443">Lipid metabolism</keyword>
<keyword id="KW-0547">Nucleotide-binding</keyword>
<keyword id="KW-0808">Transferase</keyword>
<gene>
    <name evidence="1" type="primary">accA</name>
    <name type="ordered locus">EcolC_3475</name>
</gene>
<name>ACCA_ECOLC</name>
<accession>B1IQF6</accession>
<organism>
    <name type="scientific">Escherichia coli (strain ATCC 8739 / DSM 1576 / NBRC 3972 / NCIMB 8545 / WDCM 00012 / Crooks)</name>
    <dbReference type="NCBI Taxonomy" id="481805"/>
    <lineage>
        <taxon>Bacteria</taxon>
        <taxon>Pseudomonadati</taxon>
        <taxon>Pseudomonadota</taxon>
        <taxon>Gammaproteobacteria</taxon>
        <taxon>Enterobacterales</taxon>
        <taxon>Enterobacteriaceae</taxon>
        <taxon>Escherichia</taxon>
    </lineage>
</organism>
<proteinExistence type="inferred from homology"/>
<sequence>MSLNFLDFEQPIAELEAKIDSLTAVSRQDEKLDINIDEEVHRLREKSVELTRKIFADLGAWQIAQLARHPQRPYTLDYVRLAFDEFDELAGDRAYADDKAIVGGIARLDGRPVMIIGHQKGRETKEKIRRNFGMPAPEGYRKALRLMQMAERFKMPIITFIDTPGAYPGVGAEERGQSEAIARNLREMSRLSVPTICTVIGEGGSGGALAIGVGDKVNMLQYSTYSVISPEGCASILWKSADKAPLAAEAMGIIAPRLKELKLIDSIIPEPLGGAHRNPEAMAASLKAQLLADLADLDVLSTEDLKNRRYQRLMSYGYA</sequence>
<feature type="chain" id="PRO_1000083925" description="Acetyl-coenzyme A carboxylase carboxyl transferase subunit alpha">
    <location>
        <begin position="1"/>
        <end position="319"/>
    </location>
</feature>
<feature type="domain" description="CoA carboxyltransferase C-terminal" evidence="2">
    <location>
        <begin position="35"/>
        <end position="296"/>
    </location>
</feature>